<feature type="signal peptide" evidence="4">
    <location>
        <begin position="1"/>
        <end position="21"/>
    </location>
</feature>
<feature type="chain" id="PRO_0000312291" description="5-hydroxytryptamine receptor 3B">
    <location>
        <begin position="22"/>
        <end position="437"/>
    </location>
</feature>
<feature type="topological domain" description="Extracellular" evidence="2">
    <location>
        <begin position="22"/>
        <end position="235"/>
    </location>
</feature>
<feature type="transmembrane region" description="Helical; Name=1" evidence="4">
    <location>
        <begin position="236"/>
        <end position="255"/>
    </location>
</feature>
<feature type="topological domain" description="Cytoplasmic" evidence="2">
    <location>
        <begin position="256"/>
        <end position="266"/>
    </location>
</feature>
<feature type="transmembrane region" description="Helical; Name=2" evidence="4">
    <location>
        <begin position="267"/>
        <end position="284"/>
    </location>
</feature>
<feature type="topological domain" description="Extracellular" evidence="2">
    <location>
        <begin position="285"/>
        <end position="295"/>
    </location>
</feature>
<feature type="transmembrane region" description="Helical; Name=3" evidence="4">
    <location>
        <begin position="296"/>
        <end position="324"/>
    </location>
</feature>
<feature type="topological domain" description="Cytoplasmic" evidence="2">
    <location>
        <begin position="325"/>
        <end position="410"/>
    </location>
</feature>
<feature type="transmembrane region" description="Helical; Name=4" evidence="4">
    <location>
        <begin position="411"/>
        <end position="434"/>
    </location>
</feature>
<feature type="topological domain" description="Extracellular" evidence="2">
    <location>
        <begin position="435"/>
        <end position="437"/>
    </location>
</feature>
<feature type="region of interest" description="HA-stretch; determines single-channel conductance in 5-HT3 receptors" evidence="2">
    <location>
        <begin position="377"/>
        <end position="409"/>
    </location>
</feature>
<feature type="glycosylation site" description="N-linked (GlcNAc...) asparagine" evidence="4">
    <location>
        <position position="25"/>
    </location>
</feature>
<feature type="glycosylation site" description="N-linked (GlcNAc...) asparagine" evidence="4">
    <location>
        <position position="92"/>
    </location>
</feature>
<feature type="glycosylation site" description="N-linked (GlcNAc...) asparagine" evidence="4">
    <location>
        <position position="134"/>
    </location>
</feature>
<feature type="disulfide bond" evidence="3">
    <location>
        <begin position="151"/>
        <end position="165"/>
    </location>
</feature>
<feature type="sequence conflict" description="In Ref. 1; AAG30903." evidence="7" ref="1">
    <original>K</original>
    <variation>E</variation>
    <location>
        <position position="194"/>
    </location>
</feature>
<feature type="sequence conflict" description="In Ref. 1; AAG30903." evidence="7" ref="1">
    <original>S</original>
    <variation>N</variation>
    <location>
        <position position="217"/>
    </location>
</feature>
<sequence length="437" mass="50336">MILLWSCLLVAVVGILGTATPQPGNSSLHRLTRQLLQQYHKEVRPVYNWAEATTVYLDLCVHAVLDVDVQNQKLKTSMWYREVWNDEFLSWNSSLFDDIQEISLPLSAIWAPDIIINEFVDVERSPDLPYVYVNSSGTIRNHKPIQVVSACSLQTYAFPFDIQNCSLTFNSILHTVEDIDLGFLRNQEDIENDKRSFLNDSEWQLLSVTSTYHIRQSSAGDFAQIRFNVVIRRCPLAYVVSLLIPSIFLMLVDLGSFYLPPNCRARIVFKTNVLVGYTVFRVNMSDEVPRSAGCTSLIGVFFTVCMALLVLSLSKSILLIKFLYEERHSEQERPLMCLRGDSDANESRLYLRAPCAEDTESPVRQEHQVPSDTLKDFWFQLQSINNSLRTRDQVYQKEVEWLAILCHFDQLLFRIYLAVLGLYTVTLCSLWALWSRM</sequence>
<organism>
    <name type="scientific">Rattus norvegicus</name>
    <name type="common">Rat</name>
    <dbReference type="NCBI Taxonomy" id="10116"/>
    <lineage>
        <taxon>Eukaryota</taxon>
        <taxon>Metazoa</taxon>
        <taxon>Chordata</taxon>
        <taxon>Craniata</taxon>
        <taxon>Vertebrata</taxon>
        <taxon>Euteleostomi</taxon>
        <taxon>Mammalia</taxon>
        <taxon>Eutheria</taxon>
        <taxon>Euarchontoglires</taxon>
        <taxon>Glires</taxon>
        <taxon>Rodentia</taxon>
        <taxon>Myomorpha</taxon>
        <taxon>Muroidea</taxon>
        <taxon>Muridae</taxon>
        <taxon>Murinae</taxon>
        <taxon>Rattus</taxon>
    </lineage>
</organism>
<reference key="1">
    <citation type="journal article" date="2000" name="J. Neurochem.">
        <title>Evidence for expression of heteromeric serotonin 5-HT(3) receptors in rodents.</title>
        <authorList>
            <person name="Hanna M.C."/>
            <person name="Davies P.A."/>
            <person name="Hales T.G."/>
            <person name="Kirkness E.F."/>
        </authorList>
    </citation>
    <scope>NUCLEOTIDE SEQUENCE [MRNA]</scope>
    <scope>FUNCTION</scope>
    <scope>SUBUNIT</scope>
    <scope>INDUCTION</scope>
    <source>
        <strain>Sprague-Dawley</strain>
    </source>
</reference>
<reference key="2">
    <citation type="journal article" date="2002" name="J. Neurosci.">
        <title>Differential composition of 5-hydroxytryptamine3 receptors synthesized in the rat CNS and peripheral nervous system.</title>
        <authorList>
            <person name="Morales M."/>
            <person name="Wang S.-D."/>
        </authorList>
    </citation>
    <scope>SUBUNIT</scope>
    <scope>TISSUE SPECIFICITY</scope>
</reference>
<accession>Q9JJ16</accession>
<accession>Q9ERJ5</accession>
<evidence type="ECO:0000250" key="1"/>
<evidence type="ECO:0000250" key="2">
    <source>
        <dbReference type="UniProtKB" id="O95264"/>
    </source>
</evidence>
<evidence type="ECO:0000250" key="3">
    <source>
        <dbReference type="UniProtKB" id="P23979"/>
    </source>
</evidence>
<evidence type="ECO:0000255" key="4"/>
<evidence type="ECO:0000269" key="5">
    <source>
    </source>
</evidence>
<evidence type="ECO:0000269" key="6">
    <source>
    </source>
</evidence>
<evidence type="ECO:0000305" key="7"/>
<evidence type="ECO:0000305" key="8">
    <source>
    </source>
</evidence>
<evidence type="ECO:0000312" key="9">
    <source>
        <dbReference type="RGD" id="61820"/>
    </source>
</evidence>
<keyword id="KW-1003">Cell membrane</keyword>
<keyword id="KW-1015">Disulfide bond</keyword>
<keyword id="KW-0325">Glycoprotein</keyword>
<keyword id="KW-0407">Ion channel</keyword>
<keyword id="KW-0406">Ion transport</keyword>
<keyword id="KW-1071">Ligand-gated ion channel</keyword>
<keyword id="KW-0472">Membrane</keyword>
<keyword id="KW-0628">Postsynaptic cell membrane</keyword>
<keyword id="KW-0675">Receptor</keyword>
<keyword id="KW-1185">Reference proteome</keyword>
<keyword id="KW-0732">Signal</keyword>
<keyword id="KW-0770">Synapse</keyword>
<keyword id="KW-0812">Transmembrane</keyword>
<keyword id="KW-1133">Transmembrane helix</keyword>
<keyword id="KW-0813">Transport</keyword>
<name>5HT3B_RAT</name>
<comment type="function">
    <text evidence="5">Forms serotonin (5-hydroxytryptamine/5-HT3)-activated cation-selective channel complexes, which when activated cause fast, depolarizing responses in neurons.</text>
</comment>
<comment type="catalytic activity">
    <reaction evidence="2">
        <text>Na(+)(in) = Na(+)(out)</text>
        <dbReference type="Rhea" id="RHEA:34963"/>
        <dbReference type="ChEBI" id="CHEBI:29101"/>
    </reaction>
</comment>
<comment type="catalytic activity">
    <reaction evidence="2">
        <text>K(+)(in) = K(+)(out)</text>
        <dbReference type="Rhea" id="RHEA:29463"/>
        <dbReference type="ChEBI" id="CHEBI:29103"/>
    </reaction>
</comment>
<comment type="catalytic activity">
    <reaction evidence="2">
        <text>Ca(2+)(in) = Ca(2+)(out)</text>
        <dbReference type="Rhea" id="RHEA:29671"/>
        <dbReference type="ChEBI" id="CHEBI:29108"/>
    </reaction>
</comment>
<comment type="subunit">
    <text evidence="5 6">Forms homopentameric as well as heteropentameric serotonin-activated cation-selective channel complexes with HTR3A. The homomeric complex is not functional. Heteropentameric complexes display properties which resemble that of neuronal serotonin-activated channels in vivo.</text>
</comment>
<comment type="subcellular location">
    <subcellularLocation>
        <location evidence="2">Postsynaptic cell membrane</location>
        <topology evidence="4">Multi-pass membrane protein</topology>
    </subcellularLocation>
    <subcellularLocation>
        <location evidence="2">Cell membrane</location>
        <topology evidence="4">Multi-pass membrane protein</topology>
    </subcellularLocation>
    <text evidence="2">Presumably retained within the endoplasmic reticulum unless complexed with HTR3A.</text>
</comment>
<comment type="tissue specificity">
    <text evidence="6">Expressed in peripheral neurons, but not in neurons of the central nervous system.</text>
</comment>
<comment type="induction">
    <text evidence="5">By nerve growth factor.</text>
</comment>
<comment type="domain">
    <text evidence="2">The HA-stretch region of HTR3B seems to confer increased conductance to HTR3A/HTR3B heteromers compared to that of HTR3A homomers.</text>
</comment>
<comment type="PTM">
    <text evidence="1">N-glycosylation is required for membrane localization.</text>
</comment>
<comment type="similarity">
    <text evidence="7">Belongs to the ligand-gated ion channel (TC 1.A.9) family. 5-hydroxytryptamine receptor (TC 1.A.9.2) subfamily. HTR3B sub-subfamily.</text>
</comment>
<dbReference type="EMBL" id="AF155044">
    <property type="protein sequence ID" value="AAF73283.1"/>
    <property type="molecule type" value="mRNA"/>
</dbReference>
<dbReference type="EMBL" id="AF303447">
    <property type="protein sequence ID" value="AAG30903.1"/>
    <property type="molecule type" value="mRNA"/>
</dbReference>
<dbReference type="RefSeq" id="NP_071525.1">
    <property type="nucleotide sequence ID" value="NM_022189.1"/>
</dbReference>
<dbReference type="SMR" id="Q9JJ16"/>
<dbReference type="ComplexPortal" id="CPX-277">
    <property type="entry name" value="5-hydroxytryptamine-3A/B receptor complex"/>
</dbReference>
<dbReference type="FunCoup" id="Q9JJ16">
    <property type="interactions" value="92"/>
</dbReference>
<dbReference type="STRING" id="10116.ENSRNOP00000009574"/>
<dbReference type="BindingDB" id="Q9JJ16"/>
<dbReference type="ChEMBL" id="CHEMBL2094116"/>
<dbReference type="DrugCentral" id="Q9JJ16"/>
<dbReference type="TCDB" id="1.A.9.2.2">
    <property type="family name" value="the neurotransmitter receptor, cys loop, ligand-gated ion channel (lic) family"/>
</dbReference>
<dbReference type="GlyCosmos" id="Q9JJ16">
    <property type="glycosylation" value="3 sites, No reported glycans"/>
</dbReference>
<dbReference type="GlyGen" id="Q9JJ16">
    <property type="glycosylation" value="3 sites"/>
</dbReference>
<dbReference type="PhosphoSitePlus" id="Q9JJ16"/>
<dbReference type="PaxDb" id="10116-ENSRNOP00000009574"/>
<dbReference type="GeneID" id="58963"/>
<dbReference type="KEGG" id="rno:58963"/>
<dbReference type="UCSC" id="RGD:61820">
    <property type="organism name" value="rat"/>
</dbReference>
<dbReference type="AGR" id="RGD:61820"/>
<dbReference type="CTD" id="9177"/>
<dbReference type="RGD" id="61820">
    <property type="gene designation" value="Htr3b"/>
</dbReference>
<dbReference type="eggNOG" id="KOG3645">
    <property type="taxonomic scope" value="Eukaryota"/>
</dbReference>
<dbReference type="InParanoid" id="Q9JJ16"/>
<dbReference type="OrthoDB" id="57427at9989"/>
<dbReference type="PhylomeDB" id="Q9JJ16"/>
<dbReference type="Reactome" id="R-RNO-112314">
    <property type="pathway name" value="Neurotransmitter receptors and postsynaptic signal transmission"/>
</dbReference>
<dbReference type="PRO" id="PR:Q9JJ16"/>
<dbReference type="Proteomes" id="UP000002494">
    <property type="component" value="Unplaced"/>
</dbReference>
<dbReference type="GO" id="GO:0030424">
    <property type="term" value="C:axon"/>
    <property type="evidence" value="ECO:0000314"/>
    <property type="project" value="RGD"/>
</dbReference>
<dbReference type="GO" id="GO:0009986">
    <property type="term" value="C:cell surface"/>
    <property type="evidence" value="ECO:0000266"/>
    <property type="project" value="RGD"/>
</dbReference>
<dbReference type="GO" id="GO:0043005">
    <property type="term" value="C:neuron projection"/>
    <property type="evidence" value="ECO:0000318"/>
    <property type="project" value="GO_Central"/>
</dbReference>
<dbReference type="GO" id="GO:0043025">
    <property type="term" value="C:neuronal cell body"/>
    <property type="evidence" value="ECO:0000314"/>
    <property type="project" value="RGD"/>
</dbReference>
<dbReference type="GO" id="GO:0005886">
    <property type="term" value="C:plasma membrane"/>
    <property type="evidence" value="ECO:0000266"/>
    <property type="project" value="RGD"/>
</dbReference>
<dbReference type="GO" id="GO:0045211">
    <property type="term" value="C:postsynaptic membrane"/>
    <property type="evidence" value="ECO:0007669"/>
    <property type="project" value="UniProtKB-SubCell"/>
</dbReference>
<dbReference type="GO" id="GO:1904602">
    <property type="term" value="C:serotonin-activated cation-selective channel complex"/>
    <property type="evidence" value="ECO:0000266"/>
    <property type="project" value="RGD"/>
</dbReference>
<dbReference type="GO" id="GO:0045202">
    <property type="term" value="C:synapse"/>
    <property type="evidence" value="ECO:0000318"/>
    <property type="project" value="GO_Central"/>
</dbReference>
<dbReference type="GO" id="GO:1902495">
    <property type="term" value="C:transmembrane transporter complex"/>
    <property type="evidence" value="ECO:0000318"/>
    <property type="project" value="GO_Central"/>
</dbReference>
<dbReference type="GO" id="GO:0005231">
    <property type="term" value="F:excitatory extracellular ligand-gated monoatomic ion channel activity"/>
    <property type="evidence" value="ECO:0000318"/>
    <property type="project" value="GO_Central"/>
</dbReference>
<dbReference type="GO" id="GO:0022850">
    <property type="term" value="F:serotonin-gated monoatomic cation channel activity"/>
    <property type="evidence" value="ECO:0000314"/>
    <property type="project" value="UniProtKB"/>
</dbReference>
<dbReference type="GO" id="GO:1904315">
    <property type="term" value="F:transmitter-gated monoatomic ion channel activity involved in regulation of postsynaptic membrane potential"/>
    <property type="evidence" value="ECO:0000318"/>
    <property type="project" value="GO_Central"/>
</dbReference>
<dbReference type="GO" id="GO:0071363">
    <property type="term" value="P:cellular response to growth factor stimulus"/>
    <property type="evidence" value="ECO:0000270"/>
    <property type="project" value="RGD"/>
</dbReference>
<dbReference type="GO" id="GO:0007268">
    <property type="term" value="P:chemical synaptic transmission"/>
    <property type="evidence" value="ECO:0000318"/>
    <property type="project" value="GO_Central"/>
</dbReference>
<dbReference type="GO" id="GO:0098662">
    <property type="term" value="P:inorganic cation transmembrane transport"/>
    <property type="evidence" value="ECO:0000266"/>
    <property type="project" value="RGD"/>
</dbReference>
<dbReference type="GO" id="GO:0034220">
    <property type="term" value="P:monoatomic ion transmembrane transport"/>
    <property type="evidence" value="ECO:0000318"/>
    <property type="project" value="GO_Central"/>
</dbReference>
<dbReference type="GO" id="GO:0042391">
    <property type="term" value="P:regulation of membrane potential"/>
    <property type="evidence" value="ECO:0000318"/>
    <property type="project" value="GO_Central"/>
</dbReference>
<dbReference type="GO" id="GO:0007210">
    <property type="term" value="P:serotonin receptor signaling pathway"/>
    <property type="evidence" value="ECO:0000266"/>
    <property type="project" value="RGD"/>
</dbReference>
<dbReference type="GO" id="GO:0140227">
    <property type="term" value="P:serotonin-gated cation-selective signaling pathway"/>
    <property type="evidence" value="ECO:0000266"/>
    <property type="project" value="RGD"/>
</dbReference>
<dbReference type="CDD" id="cd19063">
    <property type="entry name" value="LGIC_TM_5-HT3"/>
    <property type="match status" value="1"/>
</dbReference>
<dbReference type="FunFam" id="2.70.170.10:FF:000017">
    <property type="entry name" value="5-hydroxytryptamine receptor 3A"/>
    <property type="match status" value="1"/>
</dbReference>
<dbReference type="FunFam" id="1.20.58.390:FF:000056">
    <property type="entry name" value="5-hydroxytryptamine receptor 3B"/>
    <property type="match status" value="1"/>
</dbReference>
<dbReference type="Gene3D" id="2.70.170.10">
    <property type="entry name" value="Neurotransmitter-gated ion-channel ligand-binding domain"/>
    <property type="match status" value="1"/>
</dbReference>
<dbReference type="Gene3D" id="1.20.58.390">
    <property type="entry name" value="Neurotransmitter-gated ion-channel transmembrane domain"/>
    <property type="match status" value="1"/>
</dbReference>
<dbReference type="InterPro" id="IPR008132">
    <property type="entry name" value="5HT3_rcpt"/>
</dbReference>
<dbReference type="InterPro" id="IPR008134">
    <property type="entry name" value="5HT3_rcpt_B"/>
</dbReference>
<dbReference type="InterPro" id="IPR049944">
    <property type="entry name" value="LGIC_TM_5-HT3"/>
</dbReference>
<dbReference type="InterPro" id="IPR006202">
    <property type="entry name" value="Neur_chan_lig-bd"/>
</dbReference>
<dbReference type="InterPro" id="IPR036734">
    <property type="entry name" value="Neur_chan_lig-bd_sf"/>
</dbReference>
<dbReference type="InterPro" id="IPR006201">
    <property type="entry name" value="Neur_channel"/>
</dbReference>
<dbReference type="InterPro" id="IPR036719">
    <property type="entry name" value="Neuro-gated_channel_TM_sf"/>
</dbReference>
<dbReference type="InterPro" id="IPR038050">
    <property type="entry name" value="Neuro_actylchol_rec"/>
</dbReference>
<dbReference type="InterPro" id="IPR006029">
    <property type="entry name" value="Neurotrans-gated_channel_TM"/>
</dbReference>
<dbReference type="NCBIfam" id="TIGR00860">
    <property type="entry name" value="LIC"/>
    <property type="match status" value="1"/>
</dbReference>
<dbReference type="PANTHER" id="PTHR18945">
    <property type="entry name" value="NEUROTRANSMITTER GATED ION CHANNEL"/>
    <property type="match status" value="1"/>
</dbReference>
<dbReference type="Pfam" id="PF02931">
    <property type="entry name" value="Neur_chan_LBD"/>
    <property type="match status" value="1"/>
</dbReference>
<dbReference type="Pfam" id="PF02932">
    <property type="entry name" value="Neur_chan_memb"/>
    <property type="match status" value="1"/>
</dbReference>
<dbReference type="PRINTS" id="PR01710">
    <property type="entry name" value="5HT3BRECEPTR"/>
</dbReference>
<dbReference type="PRINTS" id="PR01708">
    <property type="entry name" value="5HT3RECEPTOR"/>
</dbReference>
<dbReference type="PRINTS" id="PR00252">
    <property type="entry name" value="NRIONCHANNEL"/>
</dbReference>
<dbReference type="SUPFAM" id="SSF90112">
    <property type="entry name" value="Neurotransmitter-gated ion-channel transmembrane pore"/>
    <property type="match status" value="1"/>
</dbReference>
<dbReference type="SUPFAM" id="SSF63712">
    <property type="entry name" value="Nicotinic receptor ligand binding domain-like"/>
    <property type="match status" value="1"/>
</dbReference>
<protein>
    <recommendedName>
        <fullName evidence="8">5-hydroxytryptamine receptor 3B</fullName>
        <shortName>5-HT3-B</shortName>
        <shortName>5-HT3B</shortName>
    </recommendedName>
    <alternativeName>
        <fullName>Serotonin receptor 3B</fullName>
    </alternativeName>
</protein>
<gene>
    <name evidence="9" type="primary">Htr3b</name>
</gene>
<proteinExistence type="evidence at protein level"/>